<organism>
    <name type="scientific">Shigella boydii serotype 4 (strain Sb227)</name>
    <dbReference type="NCBI Taxonomy" id="300268"/>
    <lineage>
        <taxon>Bacteria</taxon>
        <taxon>Pseudomonadati</taxon>
        <taxon>Pseudomonadota</taxon>
        <taxon>Gammaproteobacteria</taxon>
        <taxon>Enterobacterales</taxon>
        <taxon>Enterobacteriaceae</taxon>
        <taxon>Shigella</taxon>
    </lineage>
</organism>
<feature type="chain" id="PRO_0000257467" description="tRNA (guanine-N(1)-)-methyltransferase">
    <location>
        <begin position="1"/>
        <end position="255"/>
    </location>
</feature>
<feature type="binding site" evidence="1">
    <location>
        <position position="113"/>
    </location>
    <ligand>
        <name>S-adenosyl-L-methionine</name>
        <dbReference type="ChEBI" id="CHEBI:59789"/>
    </ligand>
</feature>
<feature type="binding site" evidence="1">
    <location>
        <begin position="133"/>
        <end position="138"/>
    </location>
    <ligand>
        <name>S-adenosyl-L-methionine</name>
        <dbReference type="ChEBI" id="CHEBI:59789"/>
    </ligand>
</feature>
<proteinExistence type="inferred from homology"/>
<dbReference type="EC" id="2.1.1.228" evidence="1"/>
<dbReference type="EMBL" id="CP000036">
    <property type="protein sequence ID" value="ABB67270.1"/>
    <property type="molecule type" value="Genomic_DNA"/>
</dbReference>
<dbReference type="RefSeq" id="WP_000264777.1">
    <property type="nucleotide sequence ID" value="NC_007613.1"/>
</dbReference>
<dbReference type="SMR" id="Q31XD8"/>
<dbReference type="GeneID" id="93774457"/>
<dbReference type="KEGG" id="sbo:SBO_2743"/>
<dbReference type="HOGENOM" id="CLU_047363_0_1_6"/>
<dbReference type="Proteomes" id="UP000007067">
    <property type="component" value="Chromosome"/>
</dbReference>
<dbReference type="GO" id="GO:0005829">
    <property type="term" value="C:cytosol"/>
    <property type="evidence" value="ECO:0007669"/>
    <property type="project" value="TreeGrafter"/>
</dbReference>
<dbReference type="GO" id="GO:0052906">
    <property type="term" value="F:tRNA (guanine(37)-N1)-methyltransferase activity"/>
    <property type="evidence" value="ECO:0007669"/>
    <property type="project" value="UniProtKB-UniRule"/>
</dbReference>
<dbReference type="GO" id="GO:0002939">
    <property type="term" value="P:tRNA N1-guanine methylation"/>
    <property type="evidence" value="ECO:0007669"/>
    <property type="project" value="TreeGrafter"/>
</dbReference>
<dbReference type="CDD" id="cd18080">
    <property type="entry name" value="TrmD-like"/>
    <property type="match status" value="1"/>
</dbReference>
<dbReference type="FunFam" id="1.10.1270.20:FF:000001">
    <property type="entry name" value="tRNA (guanine-N(1)-)-methyltransferase"/>
    <property type="match status" value="1"/>
</dbReference>
<dbReference type="FunFam" id="3.40.1280.10:FF:000001">
    <property type="entry name" value="tRNA (guanine-N(1)-)-methyltransferase"/>
    <property type="match status" value="1"/>
</dbReference>
<dbReference type="Gene3D" id="3.40.1280.10">
    <property type="match status" value="1"/>
</dbReference>
<dbReference type="Gene3D" id="1.10.1270.20">
    <property type="entry name" value="tRNA(m1g37)methyltransferase, domain 2"/>
    <property type="match status" value="1"/>
</dbReference>
<dbReference type="HAMAP" id="MF_00605">
    <property type="entry name" value="TrmD"/>
    <property type="match status" value="1"/>
</dbReference>
<dbReference type="InterPro" id="IPR029028">
    <property type="entry name" value="Alpha/beta_knot_MTases"/>
</dbReference>
<dbReference type="InterPro" id="IPR023148">
    <property type="entry name" value="tRNA_m1G_MeTrfase_C_sf"/>
</dbReference>
<dbReference type="InterPro" id="IPR002649">
    <property type="entry name" value="tRNA_m1G_MeTrfase_TrmD"/>
</dbReference>
<dbReference type="InterPro" id="IPR029026">
    <property type="entry name" value="tRNA_m1G_MTases_N"/>
</dbReference>
<dbReference type="InterPro" id="IPR016009">
    <property type="entry name" value="tRNA_MeTrfase_TRMD/TRM10"/>
</dbReference>
<dbReference type="NCBIfam" id="NF000648">
    <property type="entry name" value="PRK00026.1"/>
    <property type="match status" value="1"/>
</dbReference>
<dbReference type="NCBIfam" id="TIGR00088">
    <property type="entry name" value="trmD"/>
    <property type="match status" value="1"/>
</dbReference>
<dbReference type="PANTHER" id="PTHR46417">
    <property type="entry name" value="TRNA (GUANINE-N(1)-)-METHYLTRANSFERASE"/>
    <property type="match status" value="1"/>
</dbReference>
<dbReference type="PANTHER" id="PTHR46417:SF1">
    <property type="entry name" value="TRNA (GUANINE-N(1)-)-METHYLTRANSFERASE"/>
    <property type="match status" value="1"/>
</dbReference>
<dbReference type="Pfam" id="PF01746">
    <property type="entry name" value="tRNA_m1G_MT"/>
    <property type="match status" value="1"/>
</dbReference>
<dbReference type="PIRSF" id="PIRSF000386">
    <property type="entry name" value="tRNA_mtase"/>
    <property type="match status" value="1"/>
</dbReference>
<dbReference type="SUPFAM" id="SSF75217">
    <property type="entry name" value="alpha/beta knot"/>
    <property type="match status" value="1"/>
</dbReference>
<keyword id="KW-0963">Cytoplasm</keyword>
<keyword id="KW-0489">Methyltransferase</keyword>
<keyword id="KW-0949">S-adenosyl-L-methionine</keyword>
<keyword id="KW-0808">Transferase</keyword>
<keyword id="KW-0819">tRNA processing</keyword>
<accession>Q31XD8</accession>
<name>TRMD_SHIBS</name>
<sequence>MWIGIISLFPEMFRAITDYGVTGRAVKNGLLSIQSWSPRDFTHDRHRTVDDRPYGGGPGMLMMVQPLRDAIHAAKAAAGEGAKVIYLSPQGRKLDQAGVSELATNQKLILVCGRYEGIDERVIQTEIDEEWSIGDYVLSGGELPAMTLIDSVSRFIPGVLGHEASATEDSFAEGLLDCPHYTRPEVLEGMEVPPVLLSGNHAEIRRWRLKQSLGRTWLRRPELLENLALTEEQARLLAEFKTEHAQQQHKHDGMA</sequence>
<reference key="1">
    <citation type="journal article" date="2005" name="Nucleic Acids Res.">
        <title>Genome dynamics and diversity of Shigella species, the etiologic agents of bacillary dysentery.</title>
        <authorList>
            <person name="Yang F."/>
            <person name="Yang J."/>
            <person name="Zhang X."/>
            <person name="Chen L."/>
            <person name="Jiang Y."/>
            <person name="Yan Y."/>
            <person name="Tang X."/>
            <person name="Wang J."/>
            <person name="Xiong Z."/>
            <person name="Dong J."/>
            <person name="Xue Y."/>
            <person name="Zhu Y."/>
            <person name="Xu X."/>
            <person name="Sun L."/>
            <person name="Chen S."/>
            <person name="Nie H."/>
            <person name="Peng J."/>
            <person name="Xu J."/>
            <person name="Wang Y."/>
            <person name="Yuan Z."/>
            <person name="Wen Y."/>
            <person name="Yao Z."/>
            <person name="Shen Y."/>
            <person name="Qiang B."/>
            <person name="Hou Y."/>
            <person name="Yu J."/>
            <person name="Jin Q."/>
        </authorList>
    </citation>
    <scope>NUCLEOTIDE SEQUENCE [LARGE SCALE GENOMIC DNA]</scope>
    <source>
        <strain>Sb227</strain>
    </source>
</reference>
<gene>
    <name evidence="1" type="primary">trmD</name>
    <name type="ordered locus">SBO_2743</name>
</gene>
<protein>
    <recommendedName>
        <fullName evidence="1">tRNA (guanine-N(1)-)-methyltransferase</fullName>
        <ecNumber evidence="1">2.1.1.228</ecNumber>
    </recommendedName>
    <alternativeName>
        <fullName evidence="1">M1G-methyltransferase</fullName>
    </alternativeName>
    <alternativeName>
        <fullName evidence="1">tRNA [GM37] methyltransferase</fullName>
    </alternativeName>
</protein>
<comment type="function">
    <text evidence="1">Specifically methylates guanosine-37 in various tRNAs.</text>
</comment>
<comment type="catalytic activity">
    <reaction evidence="1">
        <text>guanosine(37) in tRNA + S-adenosyl-L-methionine = N(1)-methylguanosine(37) in tRNA + S-adenosyl-L-homocysteine + H(+)</text>
        <dbReference type="Rhea" id="RHEA:36899"/>
        <dbReference type="Rhea" id="RHEA-COMP:10145"/>
        <dbReference type="Rhea" id="RHEA-COMP:10147"/>
        <dbReference type="ChEBI" id="CHEBI:15378"/>
        <dbReference type="ChEBI" id="CHEBI:57856"/>
        <dbReference type="ChEBI" id="CHEBI:59789"/>
        <dbReference type="ChEBI" id="CHEBI:73542"/>
        <dbReference type="ChEBI" id="CHEBI:74269"/>
        <dbReference type="EC" id="2.1.1.228"/>
    </reaction>
</comment>
<comment type="subunit">
    <text evidence="1">Homodimer.</text>
</comment>
<comment type="subcellular location">
    <subcellularLocation>
        <location evidence="1">Cytoplasm</location>
    </subcellularLocation>
</comment>
<comment type="similarity">
    <text evidence="1">Belongs to the RNA methyltransferase TrmD family.</text>
</comment>
<evidence type="ECO:0000255" key="1">
    <source>
        <dbReference type="HAMAP-Rule" id="MF_00605"/>
    </source>
</evidence>